<feature type="chain" id="PRO_0000249495" description="Centromere protein N">
    <location>
        <begin position="1"/>
        <end position="337"/>
    </location>
</feature>
<feature type="modified residue" description="Phosphoserine" evidence="2">
    <location>
        <position position="226"/>
    </location>
</feature>
<feature type="modified residue" description="Phosphoserine" evidence="2">
    <location>
        <position position="233"/>
    </location>
</feature>
<feature type="splice variant" id="VSP_020443" description="In isoform 2." evidence="3">
    <location>
        <begin position="1"/>
        <end position="87"/>
    </location>
</feature>
<feature type="splice variant" id="VSP_020444" description="In isoform 3." evidence="3">
    <original>LDSKITHENTEEKVRVHRVT</original>
    <variation>CMYALSQSWAWGSCAAKHLC</variation>
    <location>
        <begin position="231"/>
        <end position="250"/>
    </location>
</feature>
<feature type="splice variant" id="VSP_020445" description="In isoform 3." evidence="3">
    <location>
        <begin position="251"/>
        <end position="337"/>
    </location>
</feature>
<name>CENPN_MOUSE</name>
<keyword id="KW-0025">Alternative splicing</keyword>
<keyword id="KW-0137">Centromere</keyword>
<keyword id="KW-0158">Chromosome</keyword>
<keyword id="KW-0995">Kinetochore</keyword>
<keyword id="KW-0539">Nucleus</keyword>
<keyword id="KW-0597">Phosphoprotein</keyword>
<keyword id="KW-1185">Reference proteome</keyword>
<organism>
    <name type="scientific">Mus musculus</name>
    <name type="common">Mouse</name>
    <dbReference type="NCBI Taxonomy" id="10090"/>
    <lineage>
        <taxon>Eukaryota</taxon>
        <taxon>Metazoa</taxon>
        <taxon>Chordata</taxon>
        <taxon>Craniata</taxon>
        <taxon>Vertebrata</taxon>
        <taxon>Euteleostomi</taxon>
        <taxon>Mammalia</taxon>
        <taxon>Eutheria</taxon>
        <taxon>Euarchontoglires</taxon>
        <taxon>Glires</taxon>
        <taxon>Rodentia</taxon>
        <taxon>Myomorpha</taxon>
        <taxon>Muroidea</taxon>
        <taxon>Muridae</taxon>
        <taxon>Murinae</taxon>
        <taxon>Mus</taxon>
        <taxon>Mus</taxon>
    </lineage>
</organism>
<reference key="1">
    <citation type="journal article" date="2005" name="Science">
        <title>The transcriptional landscape of the mammalian genome.</title>
        <authorList>
            <person name="Carninci P."/>
            <person name="Kasukawa T."/>
            <person name="Katayama S."/>
            <person name="Gough J."/>
            <person name="Frith M.C."/>
            <person name="Maeda N."/>
            <person name="Oyama R."/>
            <person name="Ravasi T."/>
            <person name="Lenhard B."/>
            <person name="Wells C."/>
            <person name="Kodzius R."/>
            <person name="Shimokawa K."/>
            <person name="Bajic V.B."/>
            <person name="Brenner S.E."/>
            <person name="Batalov S."/>
            <person name="Forrest A.R."/>
            <person name="Zavolan M."/>
            <person name="Davis M.J."/>
            <person name="Wilming L.G."/>
            <person name="Aidinis V."/>
            <person name="Allen J.E."/>
            <person name="Ambesi-Impiombato A."/>
            <person name="Apweiler R."/>
            <person name="Aturaliya R.N."/>
            <person name="Bailey T.L."/>
            <person name="Bansal M."/>
            <person name="Baxter L."/>
            <person name="Beisel K.W."/>
            <person name="Bersano T."/>
            <person name="Bono H."/>
            <person name="Chalk A.M."/>
            <person name="Chiu K.P."/>
            <person name="Choudhary V."/>
            <person name="Christoffels A."/>
            <person name="Clutterbuck D.R."/>
            <person name="Crowe M.L."/>
            <person name="Dalla E."/>
            <person name="Dalrymple B.P."/>
            <person name="de Bono B."/>
            <person name="Della Gatta G."/>
            <person name="di Bernardo D."/>
            <person name="Down T."/>
            <person name="Engstrom P."/>
            <person name="Fagiolini M."/>
            <person name="Faulkner G."/>
            <person name="Fletcher C.F."/>
            <person name="Fukushima T."/>
            <person name="Furuno M."/>
            <person name="Futaki S."/>
            <person name="Gariboldi M."/>
            <person name="Georgii-Hemming P."/>
            <person name="Gingeras T.R."/>
            <person name="Gojobori T."/>
            <person name="Green R.E."/>
            <person name="Gustincich S."/>
            <person name="Harbers M."/>
            <person name="Hayashi Y."/>
            <person name="Hensch T.K."/>
            <person name="Hirokawa N."/>
            <person name="Hill D."/>
            <person name="Huminiecki L."/>
            <person name="Iacono M."/>
            <person name="Ikeo K."/>
            <person name="Iwama A."/>
            <person name="Ishikawa T."/>
            <person name="Jakt M."/>
            <person name="Kanapin A."/>
            <person name="Katoh M."/>
            <person name="Kawasawa Y."/>
            <person name="Kelso J."/>
            <person name="Kitamura H."/>
            <person name="Kitano H."/>
            <person name="Kollias G."/>
            <person name="Krishnan S.P."/>
            <person name="Kruger A."/>
            <person name="Kummerfeld S.K."/>
            <person name="Kurochkin I.V."/>
            <person name="Lareau L.F."/>
            <person name="Lazarevic D."/>
            <person name="Lipovich L."/>
            <person name="Liu J."/>
            <person name="Liuni S."/>
            <person name="McWilliam S."/>
            <person name="Madan Babu M."/>
            <person name="Madera M."/>
            <person name="Marchionni L."/>
            <person name="Matsuda H."/>
            <person name="Matsuzawa S."/>
            <person name="Miki H."/>
            <person name="Mignone F."/>
            <person name="Miyake S."/>
            <person name="Morris K."/>
            <person name="Mottagui-Tabar S."/>
            <person name="Mulder N."/>
            <person name="Nakano N."/>
            <person name="Nakauchi H."/>
            <person name="Ng P."/>
            <person name="Nilsson R."/>
            <person name="Nishiguchi S."/>
            <person name="Nishikawa S."/>
            <person name="Nori F."/>
            <person name="Ohara O."/>
            <person name="Okazaki Y."/>
            <person name="Orlando V."/>
            <person name="Pang K.C."/>
            <person name="Pavan W.J."/>
            <person name="Pavesi G."/>
            <person name="Pesole G."/>
            <person name="Petrovsky N."/>
            <person name="Piazza S."/>
            <person name="Reed J."/>
            <person name="Reid J.F."/>
            <person name="Ring B.Z."/>
            <person name="Ringwald M."/>
            <person name="Rost B."/>
            <person name="Ruan Y."/>
            <person name="Salzberg S.L."/>
            <person name="Sandelin A."/>
            <person name="Schneider C."/>
            <person name="Schoenbach C."/>
            <person name="Sekiguchi K."/>
            <person name="Semple C.A."/>
            <person name="Seno S."/>
            <person name="Sessa L."/>
            <person name="Sheng Y."/>
            <person name="Shibata Y."/>
            <person name="Shimada H."/>
            <person name="Shimada K."/>
            <person name="Silva D."/>
            <person name="Sinclair B."/>
            <person name="Sperling S."/>
            <person name="Stupka E."/>
            <person name="Sugiura K."/>
            <person name="Sultana R."/>
            <person name="Takenaka Y."/>
            <person name="Taki K."/>
            <person name="Tammoja K."/>
            <person name="Tan S.L."/>
            <person name="Tang S."/>
            <person name="Taylor M.S."/>
            <person name="Tegner J."/>
            <person name="Teichmann S.A."/>
            <person name="Ueda H.R."/>
            <person name="van Nimwegen E."/>
            <person name="Verardo R."/>
            <person name="Wei C.L."/>
            <person name="Yagi K."/>
            <person name="Yamanishi H."/>
            <person name="Zabarovsky E."/>
            <person name="Zhu S."/>
            <person name="Zimmer A."/>
            <person name="Hide W."/>
            <person name="Bult C."/>
            <person name="Grimmond S.M."/>
            <person name="Teasdale R.D."/>
            <person name="Liu E.T."/>
            <person name="Brusic V."/>
            <person name="Quackenbush J."/>
            <person name="Wahlestedt C."/>
            <person name="Mattick J.S."/>
            <person name="Hume D.A."/>
            <person name="Kai C."/>
            <person name="Sasaki D."/>
            <person name="Tomaru Y."/>
            <person name="Fukuda S."/>
            <person name="Kanamori-Katayama M."/>
            <person name="Suzuki M."/>
            <person name="Aoki J."/>
            <person name="Arakawa T."/>
            <person name="Iida J."/>
            <person name="Imamura K."/>
            <person name="Itoh M."/>
            <person name="Kato T."/>
            <person name="Kawaji H."/>
            <person name="Kawagashira N."/>
            <person name="Kawashima T."/>
            <person name="Kojima M."/>
            <person name="Kondo S."/>
            <person name="Konno H."/>
            <person name="Nakano K."/>
            <person name="Ninomiya N."/>
            <person name="Nishio T."/>
            <person name="Okada M."/>
            <person name="Plessy C."/>
            <person name="Shibata K."/>
            <person name="Shiraki T."/>
            <person name="Suzuki S."/>
            <person name="Tagami M."/>
            <person name="Waki K."/>
            <person name="Watahiki A."/>
            <person name="Okamura-Oho Y."/>
            <person name="Suzuki H."/>
            <person name="Kawai J."/>
            <person name="Hayashizaki Y."/>
        </authorList>
    </citation>
    <scope>NUCLEOTIDE SEQUENCE [LARGE SCALE MRNA] (ISOFORM 1)</scope>
    <source>
        <strain>C57BL/6J</strain>
    </source>
</reference>
<reference key="2">
    <citation type="journal article" date="2004" name="Genome Res.">
        <title>The status, quality, and expansion of the NIH full-length cDNA project: the Mammalian Gene Collection (MGC).</title>
        <authorList>
            <consortium name="The MGC Project Team"/>
        </authorList>
    </citation>
    <scope>NUCLEOTIDE SEQUENCE [LARGE SCALE MRNA] (ISOFORM 2)</scope>
    <scope>NUCLEOTIDE SEQUENCE [LARGE SCALE MRNA] OF 7-337 (ISOFORM 3)</scope>
    <source>
        <strain>FVB/N</strain>
        <tissue>Mammary tumor</tissue>
        <tissue>Olfactory epithelium</tissue>
    </source>
</reference>
<dbReference type="EMBL" id="AK012097">
    <property type="protein sequence ID" value="BAB28028.1"/>
    <property type="molecule type" value="mRNA"/>
</dbReference>
<dbReference type="EMBL" id="BC027119">
    <property type="protein sequence ID" value="AAH27119.1"/>
    <property type="molecule type" value="mRNA"/>
</dbReference>
<dbReference type="EMBL" id="BC058243">
    <property type="protein sequence ID" value="AAH58243.1"/>
    <property type="molecule type" value="mRNA"/>
</dbReference>
<dbReference type="CCDS" id="CCDS22693.1">
    <molecule id="Q9CZW2-1"/>
</dbReference>
<dbReference type="RefSeq" id="NP_082407.1">
    <molecule id="Q9CZW2-1"/>
    <property type="nucleotide sequence ID" value="NM_028131.3"/>
</dbReference>
<dbReference type="RefSeq" id="XP_006531450.1">
    <molecule id="Q9CZW2-1"/>
    <property type="nucleotide sequence ID" value="XM_006531387.4"/>
</dbReference>
<dbReference type="SMR" id="Q9CZW2"/>
<dbReference type="ComplexPortal" id="CPX-5704">
    <property type="entry name" value="Kinetochore CCAN complex"/>
</dbReference>
<dbReference type="FunCoup" id="Q9CZW2">
    <property type="interactions" value="1355"/>
</dbReference>
<dbReference type="IntAct" id="Q9CZW2">
    <property type="interactions" value="1"/>
</dbReference>
<dbReference type="MINT" id="Q9CZW2"/>
<dbReference type="STRING" id="10090.ENSMUSP00000034205"/>
<dbReference type="iPTMnet" id="Q9CZW2"/>
<dbReference type="PhosphoSitePlus" id="Q9CZW2"/>
<dbReference type="jPOST" id="Q9CZW2"/>
<dbReference type="PaxDb" id="10090-ENSMUSP00000034205"/>
<dbReference type="ProteomicsDB" id="280065">
    <molecule id="Q9CZW2-1"/>
</dbReference>
<dbReference type="ProteomicsDB" id="280066">
    <molecule id="Q9CZW2-2"/>
</dbReference>
<dbReference type="ProteomicsDB" id="280067">
    <molecule id="Q9CZW2-3"/>
</dbReference>
<dbReference type="Antibodypedia" id="30430">
    <property type="antibodies" value="114 antibodies from 26 providers"/>
</dbReference>
<dbReference type="DNASU" id="72155"/>
<dbReference type="Ensembl" id="ENSMUST00000034205.5">
    <molecule id="Q9CZW2-1"/>
    <property type="protein sequence ID" value="ENSMUSP00000034205.5"/>
    <property type="gene ID" value="ENSMUSG00000031756.6"/>
</dbReference>
<dbReference type="Ensembl" id="ENSMUST00000212263.2">
    <molecule id="Q9CZW2-2"/>
    <property type="protein sequence ID" value="ENSMUSP00000148413.2"/>
    <property type="gene ID" value="ENSMUSG00000031756.6"/>
</dbReference>
<dbReference type="GeneID" id="72155"/>
<dbReference type="KEGG" id="mmu:72155"/>
<dbReference type="UCSC" id="uc009noo.1">
    <molecule id="Q9CZW2-1"/>
    <property type="organism name" value="mouse"/>
</dbReference>
<dbReference type="AGR" id="MGI:1919405"/>
<dbReference type="CTD" id="55839"/>
<dbReference type="MGI" id="MGI:1919405">
    <property type="gene designation" value="Cenpn"/>
</dbReference>
<dbReference type="VEuPathDB" id="HostDB:ENSMUSG00000031756"/>
<dbReference type="eggNOG" id="ENOG502QSE8">
    <property type="taxonomic scope" value="Eukaryota"/>
</dbReference>
<dbReference type="GeneTree" id="ENSGT00390000004738"/>
<dbReference type="HOGENOM" id="CLU_070600_0_0_1"/>
<dbReference type="InParanoid" id="Q9CZW2"/>
<dbReference type="OMA" id="WSVYQMK"/>
<dbReference type="OrthoDB" id="6585699at2759"/>
<dbReference type="PhylomeDB" id="Q9CZW2"/>
<dbReference type="TreeFam" id="TF329714"/>
<dbReference type="Reactome" id="R-MMU-141444">
    <property type="pathway name" value="Amplification of signal from unattached kinetochores via a MAD2 inhibitory signal"/>
</dbReference>
<dbReference type="Reactome" id="R-MMU-2467813">
    <property type="pathway name" value="Separation of Sister Chromatids"/>
</dbReference>
<dbReference type="Reactome" id="R-MMU-2500257">
    <property type="pathway name" value="Resolution of Sister Chromatid Cohesion"/>
</dbReference>
<dbReference type="Reactome" id="R-MMU-5663220">
    <property type="pathway name" value="RHO GTPases Activate Formins"/>
</dbReference>
<dbReference type="Reactome" id="R-MMU-606279">
    <property type="pathway name" value="Deposition of new CENPA-containing nucleosomes at the centromere"/>
</dbReference>
<dbReference type="Reactome" id="R-MMU-68877">
    <property type="pathway name" value="Mitotic Prometaphase"/>
</dbReference>
<dbReference type="Reactome" id="R-MMU-9648025">
    <property type="pathway name" value="EML4 and NUDC in mitotic spindle formation"/>
</dbReference>
<dbReference type="BioGRID-ORCS" id="72155">
    <property type="hits" value="27 hits in 80 CRISPR screens"/>
</dbReference>
<dbReference type="ChiTaRS" id="Cenpn">
    <property type="organism name" value="mouse"/>
</dbReference>
<dbReference type="PRO" id="PR:Q9CZW2"/>
<dbReference type="Proteomes" id="UP000000589">
    <property type="component" value="Chromosome 8"/>
</dbReference>
<dbReference type="RNAct" id="Q9CZW2">
    <property type="molecule type" value="protein"/>
</dbReference>
<dbReference type="Bgee" id="ENSMUSG00000031756">
    <property type="expression patterns" value="Expressed in animal zygote and 159 other cell types or tissues"/>
</dbReference>
<dbReference type="ExpressionAtlas" id="Q9CZW2">
    <property type="expression patterns" value="baseline and differential"/>
</dbReference>
<dbReference type="GO" id="GO:0000939">
    <property type="term" value="C:inner kinetochore"/>
    <property type="evidence" value="ECO:0000266"/>
    <property type="project" value="ComplexPortal"/>
</dbReference>
<dbReference type="GO" id="GO:0005654">
    <property type="term" value="C:nucleoplasm"/>
    <property type="evidence" value="ECO:0007669"/>
    <property type="project" value="Ensembl"/>
</dbReference>
<dbReference type="GO" id="GO:0005634">
    <property type="term" value="C:nucleus"/>
    <property type="evidence" value="ECO:0000303"/>
    <property type="project" value="ComplexPortal"/>
</dbReference>
<dbReference type="GO" id="GO:0034080">
    <property type="term" value="P:CENP-A containing chromatin assembly"/>
    <property type="evidence" value="ECO:0007669"/>
    <property type="project" value="InterPro"/>
</dbReference>
<dbReference type="GO" id="GO:0007059">
    <property type="term" value="P:chromosome segregation"/>
    <property type="evidence" value="ECO:0000303"/>
    <property type="project" value="ComplexPortal"/>
</dbReference>
<dbReference type="InterPro" id="IPR052011">
    <property type="entry name" value="CENP-NAC/CAD_complex"/>
</dbReference>
<dbReference type="InterPro" id="IPR007902">
    <property type="entry name" value="Chl4/mis15/CENP-N"/>
</dbReference>
<dbReference type="PANTHER" id="PTHR46790">
    <property type="entry name" value="CENTROMERE PROTEIN N"/>
    <property type="match status" value="1"/>
</dbReference>
<dbReference type="PANTHER" id="PTHR46790:SF1">
    <property type="entry name" value="CENTROMERE PROTEIN N"/>
    <property type="match status" value="1"/>
</dbReference>
<dbReference type="Pfam" id="PF05238">
    <property type="entry name" value="CENP-N"/>
    <property type="match status" value="1"/>
</dbReference>
<accession>Q9CZW2</accession>
<accession>Q6PE73</accession>
<accession>Q8R2W7</accession>
<protein>
    <recommendedName>
        <fullName>Centromere protein N</fullName>
        <shortName>CENP-N</shortName>
    </recommendedName>
</protein>
<evidence type="ECO:0000250" key="1"/>
<evidence type="ECO:0000250" key="2">
    <source>
        <dbReference type="UniProtKB" id="Q96H22"/>
    </source>
</evidence>
<evidence type="ECO:0000303" key="3">
    <source>
    </source>
</evidence>
<evidence type="ECO:0000305" key="4"/>
<gene>
    <name type="primary">Cenpn</name>
</gene>
<comment type="function">
    <text evidence="2">Component of the CENPA-NAC (nucleosome-associated) complex, a complex that plays a central role in assembly of kinetochore proteins, mitotic progression and chromosome segregation. The CENPA-NAC complex recruits the CENPA-CAD (nucleosome distal) complex and may be involved in incorporation of newly synthesized CENPA into centromeres. CENPN is the first protein to bind specifically to CENPA nucleosomes and the direct binding of CENPA nucleosomes by CENPN is required for centromere assembly. Required for chromosome congression and efficiently align the chromosomes on a metaphase plate.</text>
</comment>
<comment type="subunit">
    <text evidence="2">Component of the CENPA-NAC complex, at least composed of CENPA, CENPC, CENPH, CENPM, CENPN, CENPT and CENPU. The CENPA-NAC complex interacts with the CENPA-CAD complex, composed of CENPI, CENPK, CENPL, CENPO, CENPP, CENPQ, CENPR and CENPS. Interacts directly with CENPA. Identified in a centromere complex containing histones H2A, H2B and H4, and at least CENPA, CENPB, CENPC, CENPT, CENPN, HJURP, SUPT16H, SSRP1 and RSF1.</text>
</comment>
<comment type="subcellular location">
    <subcellularLocation>
        <location evidence="1">Nucleus</location>
    </subcellularLocation>
    <subcellularLocation>
        <location evidence="1">Chromosome</location>
        <location evidence="1">Centromere</location>
    </subcellularLocation>
    <subcellularLocation>
        <location evidence="1">Chromosome</location>
        <location evidence="1">Centromere</location>
        <location evidence="1">Kinetochore</location>
    </subcellularLocation>
    <text evidence="1">Localizes exclusively in the kinetochore domain of centromeres. Kinetochore-bound levels decrease when cells enter mitosis and increase again when cells exit mitosis.</text>
</comment>
<comment type="alternative products">
    <event type="alternative splicing"/>
    <isoform>
        <id>Q9CZW2-1</id>
        <name>1</name>
        <sequence type="displayed"/>
    </isoform>
    <isoform>
        <id>Q9CZW2-2</id>
        <name>2</name>
        <sequence type="described" ref="VSP_020443"/>
    </isoform>
    <isoform>
        <id>Q9CZW2-3</id>
        <name>3</name>
        <sequence type="described" ref="VSP_020444 VSP_020445"/>
    </isoform>
</comment>
<comment type="similarity">
    <text evidence="4">Belongs to the CENP-N/CHL4 family.</text>
</comment>
<proteinExistence type="evidence at transcript level"/>
<sequence>MKENVAEFLRRTILKIPLSEMKSILEAWDFLSEDQLQTINLKQRKDYLAQEVILLCEDKRASLDDVVLLDIVYTQFHRHQKLWNVFQMSKEPGEDVDLFDMEQFQSSFKRILQRALKNVTVSFRVYEKDSVWIRVAWGTQYSQPNQYKPTFVVYYPQTPYAFISSCHLKNTVPLLHQALKVASKHHQIVHLDLRSRHLDSLKAIVFREYNQTCENYSSTTSLQEASLSMCLDSKITHENTEEKVRVHRVTQETFGTYPQPQLEFAQYKLETKFKSNIGGGLLADRKEPFRCLVKFSSPHLLEALKSLAPAGIADAPLSPLLTCIPSKKMNYFKIRDK</sequence>